<proteinExistence type="predicted"/>
<name>FB223_ARATH</name>
<dbReference type="EMBL" id="AL161514">
    <property type="protein sequence ID" value="CAB78043.1"/>
    <property type="molecule type" value="Genomic_DNA"/>
</dbReference>
<dbReference type="EMBL" id="CP002687">
    <property type="protein sequence ID" value="AEE82733.1"/>
    <property type="molecule type" value="Genomic_DNA"/>
</dbReference>
<dbReference type="PIR" id="C85093">
    <property type="entry name" value="C85093"/>
</dbReference>
<dbReference type="RefSeq" id="NP_192658.1">
    <property type="nucleotide sequence ID" value="NM_116988.1"/>
</dbReference>
<dbReference type="SMR" id="Q9M0Q9"/>
<dbReference type="FunCoup" id="Q9M0Q9">
    <property type="interactions" value="14"/>
</dbReference>
<dbReference type="PaxDb" id="3702-AT4G09190.1"/>
<dbReference type="DNASU" id="826500"/>
<dbReference type="EnsemblPlants" id="AT4G09190.1">
    <property type="protein sequence ID" value="AT4G09190.1"/>
    <property type="gene ID" value="AT4G09190"/>
</dbReference>
<dbReference type="GeneID" id="826500"/>
<dbReference type="Gramene" id="AT4G09190.1">
    <property type="protein sequence ID" value="AT4G09190.1"/>
    <property type="gene ID" value="AT4G09190"/>
</dbReference>
<dbReference type="KEGG" id="ath:AT4G09190"/>
<dbReference type="Araport" id="AT4G09190"/>
<dbReference type="TAIR" id="AT4G09190"/>
<dbReference type="HOGENOM" id="CLU_027176_8_0_1"/>
<dbReference type="InParanoid" id="Q9M0Q9"/>
<dbReference type="OMA" id="VELWILE"/>
<dbReference type="PhylomeDB" id="Q9M0Q9"/>
<dbReference type="PRO" id="PR:Q9M0Q9"/>
<dbReference type="Proteomes" id="UP000006548">
    <property type="component" value="Chromosome 4"/>
</dbReference>
<dbReference type="ExpressionAtlas" id="Q9M0Q9">
    <property type="expression patterns" value="baseline"/>
</dbReference>
<dbReference type="CDD" id="cd22157">
    <property type="entry name" value="F-box_AtFBW1-like"/>
    <property type="match status" value="1"/>
</dbReference>
<dbReference type="Gene3D" id="1.20.1280.50">
    <property type="match status" value="1"/>
</dbReference>
<dbReference type="InterPro" id="IPR013187">
    <property type="entry name" value="F-box-assoc_dom_typ3"/>
</dbReference>
<dbReference type="InterPro" id="IPR017451">
    <property type="entry name" value="F-box-assoc_interact_dom"/>
</dbReference>
<dbReference type="InterPro" id="IPR036047">
    <property type="entry name" value="F-box-like_dom_sf"/>
</dbReference>
<dbReference type="InterPro" id="IPR001810">
    <property type="entry name" value="F-box_dom"/>
</dbReference>
<dbReference type="NCBIfam" id="TIGR01640">
    <property type="entry name" value="F_box_assoc_1"/>
    <property type="match status" value="1"/>
</dbReference>
<dbReference type="PANTHER" id="PTHR31111">
    <property type="entry name" value="BNAA05G37150D PROTEIN-RELATED"/>
    <property type="match status" value="1"/>
</dbReference>
<dbReference type="PANTHER" id="PTHR31111:SF54">
    <property type="entry name" value="F-BOX DOMAIN-CONTAINING PROTEIN"/>
    <property type="match status" value="1"/>
</dbReference>
<dbReference type="Pfam" id="PF00646">
    <property type="entry name" value="F-box"/>
    <property type="match status" value="1"/>
</dbReference>
<dbReference type="Pfam" id="PF08268">
    <property type="entry name" value="FBA_3"/>
    <property type="match status" value="1"/>
</dbReference>
<dbReference type="SMART" id="SM00256">
    <property type="entry name" value="FBOX"/>
    <property type="match status" value="1"/>
</dbReference>
<dbReference type="SUPFAM" id="SSF81383">
    <property type="entry name" value="F-box domain"/>
    <property type="match status" value="1"/>
</dbReference>
<accession>Q9M0Q9</accession>
<protein>
    <recommendedName>
        <fullName>Putative F-box protein At4g09190</fullName>
    </recommendedName>
</protein>
<organism>
    <name type="scientific">Arabidopsis thaliana</name>
    <name type="common">Mouse-ear cress</name>
    <dbReference type="NCBI Taxonomy" id="3702"/>
    <lineage>
        <taxon>Eukaryota</taxon>
        <taxon>Viridiplantae</taxon>
        <taxon>Streptophyta</taxon>
        <taxon>Embryophyta</taxon>
        <taxon>Tracheophyta</taxon>
        <taxon>Spermatophyta</taxon>
        <taxon>Magnoliopsida</taxon>
        <taxon>eudicotyledons</taxon>
        <taxon>Gunneridae</taxon>
        <taxon>Pentapetalae</taxon>
        <taxon>rosids</taxon>
        <taxon>malvids</taxon>
        <taxon>Brassicales</taxon>
        <taxon>Brassicaceae</taxon>
        <taxon>Camelineae</taxon>
        <taxon>Arabidopsis</taxon>
    </lineage>
</organism>
<keyword id="KW-1185">Reference proteome</keyword>
<reference key="1">
    <citation type="journal article" date="1999" name="Nature">
        <title>Sequence and analysis of chromosome 4 of the plant Arabidopsis thaliana.</title>
        <authorList>
            <person name="Mayer K.F.X."/>
            <person name="Schueller C."/>
            <person name="Wambutt R."/>
            <person name="Murphy G."/>
            <person name="Volckaert G."/>
            <person name="Pohl T."/>
            <person name="Duesterhoeft A."/>
            <person name="Stiekema W."/>
            <person name="Entian K.-D."/>
            <person name="Terryn N."/>
            <person name="Harris B."/>
            <person name="Ansorge W."/>
            <person name="Brandt P."/>
            <person name="Grivell L.A."/>
            <person name="Rieger M."/>
            <person name="Weichselgartner M."/>
            <person name="de Simone V."/>
            <person name="Obermaier B."/>
            <person name="Mache R."/>
            <person name="Mueller M."/>
            <person name="Kreis M."/>
            <person name="Delseny M."/>
            <person name="Puigdomenech P."/>
            <person name="Watson M."/>
            <person name="Schmidtheini T."/>
            <person name="Reichert B."/>
            <person name="Portetelle D."/>
            <person name="Perez-Alonso M."/>
            <person name="Boutry M."/>
            <person name="Bancroft I."/>
            <person name="Vos P."/>
            <person name="Hoheisel J."/>
            <person name="Zimmermann W."/>
            <person name="Wedler H."/>
            <person name="Ridley P."/>
            <person name="Langham S.-A."/>
            <person name="McCullagh B."/>
            <person name="Bilham L."/>
            <person name="Robben J."/>
            <person name="van der Schueren J."/>
            <person name="Grymonprez B."/>
            <person name="Chuang Y.-J."/>
            <person name="Vandenbussche F."/>
            <person name="Braeken M."/>
            <person name="Weltjens I."/>
            <person name="Voet M."/>
            <person name="Bastiaens I."/>
            <person name="Aert R."/>
            <person name="Defoor E."/>
            <person name="Weitzenegger T."/>
            <person name="Bothe G."/>
            <person name="Ramsperger U."/>
            <person name="Hilbert H."/>
            <person name="Braun M."/>
            <person name="Holzer E."/>
            <person name="Brandt A."/>
            <person name="Peters S."/>
            <person name="van Staveren M."/>
            <person name="Dirkse W."/>
            <person name="Mooijman P."/>
            <person name="Klein Lankhorst R."/>
            <person name="Rose M."/>
            <person name="Hauf J."/>
            <person name="Koetter P."/>
            <person name="Berneiser S."/>
            <person name="Hempel S."/>
            <person name="Feldpausch M."/>
            <person name="Lamberth S."/>
            <person name="Van den Daele H."/>
            <person name="De Keyser A."/>
            <person name="Buysshaert C."/>
            <person name="Gielen J."/>
            <person name="Villarroel R."/>
            <person name="De Clercq R."/>
            <person name="van Montagu M."/>
            <person name="Rogers J."/>
            <person name="Cronin A."/>
            <person name="Quail M.A."/>
            <person name="Bray-Allen S."/>
            <person name="Clark L."/>
            <person name="Doggett J."/>
            <person name="Hall S."/>
            <person name="Kay M."/>
            <person name="Lennard N."/>
            <person name="McLay K."/>
            <person name="Mayes R."/>
            <person name="Pettett A."/>
            <person name="Rajandream M.A."/>
            <person name="Lyne M."/>
            <person name="Benes V."/>
            <person name="Rechmann S."/>
            <person name="Borkova D."/>
            <person name="Bloecker H."/>
            <person name="Scharfe M."/>
            <person name="Grimm M."/>
            <person name="Loehnert T.-H."/>
            <person name="Dose S."/>
            <person name="de Haan M."/>
            <person name="Maarse A.C."/>
            <person name="Schaefer M."/>
            <person name="Mueller-Auer S."/>
            <person name="Gabel C."/>
            <person name="Fuchs M."/>
            <person name="Fartmann B."/>
            <person name="Granderath K."/>
            <person name="Dauner D."/>
            <person name="Herzl A."/>
            <person name="Neumann S."/>
            <person name="Argiriou A."/>
            <person name="Vitale D."/>
            <person name="Liguori R."/>
            <person name="Piravandi E."/>
            <person name="Massenet O."/>
            <person name="Quigley F."/>
            <person name="Clabauld G."/>
            <person name="Muendlein A."/>
            <person name="Felber R."/>
            <person name="Schnabl S."/>
            <person name="Hiller R."/>
            <person name="Schmidt W."/>
            <person name="Lecharny A."/>
            <person name="Aubourg S."/>
            <person name="Chefdor F."/>
            <person name="Cooke R."/>
            <person name="Berger C."/>
            <person name="Monfort A."/>
            <person name="Casacuberta E."/>
            <person name="Gibbons T."/>
            <person name="Weber N."/>
            <person name="Vandenbol M."/>
            <person name="Bargues M."/>
            <person name="Terol J."/>
            <person name="Torres A."/>
            <person name="Perez-Perez A."/>
            <person name="Purnelle B."/>
            <person name="Bent E."/>
            <person name="Johnson S."/>
            <person name="Tacon D."/>
            <person name="Jesse T."/>
            <person name="Heijnen L."/>
            <person name="Schwarz S."/>
            <person name="Scholler P."/>
            <person name="Heber S."/>
            <person name="Francs P."/>
            <person name="Bielke C."/>
            <person name="Frishman D."/>
            <person name="Haase D."/>
            <person name="Lemcke K."/>
            <person name="Mewes H.-W."/>
            <person name="Stocker S."/>
            <person name="Zaccaria P."/>
            <person name="Bevan M."/>
            <person name="Wilson R.K."/>
            <person name="de la Bastide M."/>
            <person name="Habermann K."/>
            <person name="Parnell L."/>
            <person name="Dedhia N."/>
            <person name="Gnoj L."/>
            <person name="Schutz K."/>
            <person name="Huang E."/>
            <person name="Spiegel L."/>
            <person name="Sekhon M."/>
            <person name="Murray J."/>
            <person name="Sheet P."/>
            <person name="Cordes M."/>
            <person name="Abu-Threideh J."/>
            <person name="Stoneking T."/>
            <person name="Kalicki J."/>
            <person name="Graves T."/>
            <person name="Harmon G."/>
            <person name="Edwards J."/>
            <person name="Latreille P."/>
            <person name="Courtney L."/>
            <person name="Cloud J."/>
            <person name="Abbott A."/>
            <person name="Scott K."/>
            <person name="Johnson D."/>
            <person name="Minx P."/>
            <person name="Bentley D."/>
            <person name="Fulton B."/>
            <person name="Miller N."/>
            <person name="Greco T."/>
            <person name="Kemp K."/>
            <person name="Kramer J."/>
            <person name="Fulton L."/>
            <person name="Mardis E."/>
            <person name="Dante M."/>
            <person name="Pepin K."/>
            <person name="Hillier L.W."/>
            <person name="Nelson J."/>
            <person name="Spieth J."/>
            <person name="Ryan E."/>
            <person name="Andrews S."/>
            <person name="Geisel C."/>
            <person name="Layman D."/>
            <person name="Du H."/>
            <person name="Ali J."/>
            <person name="Berghoff A."/>
            <person name="Jones K."/>
            <person name="Drone K."/>
            <person name="Cotton M."/>
            <person name="Joshu C."/>
            <person name="Antonoiu B."/>
            <person name="Zidanic M."/>
            <person name="Strong C."/>
            <person name="Sun H."/>
            <person name="Lamar B."/>
            <person name="Yordan C."/>
            <person name="Ma P."/>
            <person name="Zhong J."/>
            <person name="Preston R."/>
            <person name="Vil D."/>
            <person name="Shekher M."/>
            <person name="Matero A."/>
            <person name="Shah R."/>
            <person name="Swaby I.K."/>
            <person name="O'Shaughnessy A."/>
            <person name="Rodriguez M."/>
            <person name="Hoffman J."/>
            <person name="Till S."/>
            <person name="Granat S."/>
            <person name="Shohdy N."/>
            <person name="Hasegawa A."/>
            <person name="Hameed A."/>
            <person name="Lodhi M."/>
            <person name="Johnson A."/>
            <person name="Chen E."/>
            <person name="Marra M.A."/>
            <person name="Martienssen R."/>
            <person name="McCombie W.R."/>
        </authorList>
    </citation>
    <scope>NUCLEOTIDE SEQUENCE [LARGE SCALE GENOMIC DNA]</scope>
    <source>
        <strain>cv. Columbia</strain>
    </source>
</reference>
<reference key="2">
    <citation type="journal article" date="2017" name="Plant J.">
        <title>Araport11: a complete reannotation of the Arabidopsis thaliana reference genome.</title>
        <authorList>
            <person name="Cheng C.Y."/>
            <person name="Krishnakumar V."/>
            <person name="Chan A.P."/>
            <person name="Thibaud-Nissen F."/>
            <person name="Schobel S."/>
            <person name="Town C.D."/>
        </authorList>
    </citation>
    <scope>GENOME REANNOTATION</scope>
    <source>
        <strain>cv. Columbia</strain>
    </source>
</reference>
<gene>
    <name type="ordered locus">At4g09190</name>
    <name type="ORF">T30A10.1</name>
</gene>
<sequence>MRKIQRITQFSDDNNRSQREHIPLDLIVEIVSSLPAKSIVRFRSVSKLWSSIITTPDFTSSVVTRSLSSRPCVLLIFQKHDKLFFFASPVHQKKTCPNVENFQYTIPNNGKLQRCESVHGLIYLETSTNVMFIRNPITKSFFTLPKLDSKEGRPLTGFLGYDPINGKYKVLCILKERNKIGILTLGAQESWRILSKGFLSHYKVTGYAKCIDGVIYYEGSFGDGLRQELAIMSFDLRSEKFSLIKHPKKSSIATCWSSYEGRLALVSSIASGVSLWILEDADNHKQWIYKHFPSHREFIKERWKLKGVTRTGEFIYTSYRAYVLNVEGRVLYQWFRILYVDPKRNSMRVVMHGGIAVDDIRRLDEVGYDLMKDLTVIPNHIQI</sequence>
<feature type="chain" id="PRO_0000283492" description="Putative F-box protein At4g09190">
    <location>
        <begin position="1"/>
        <end position="383"/>
    </location>
</feature>
<feature type="domain" description="F-box">
    <location>
        <begin position="16"/>
        <end position="67"/>
    </location>
</feature>